<accession>A8FMN8</accession>
<evidence type="ECO:0000255" key="1">
    <source>
        <dbReference type="HAMAP-Rule" id="MF_00291"/>
    </source>
</evidence>
<evidence type="ECO:0000256" key="2">
    <source>
        <dbReference type="SAM" id="MobiDB-lite"/>
    </source>
</evidence>
<evidence type="ECO:0000305" key="3"/>
<organism>
    <name type="scientific">Campylobacter jejuni subsp. jejuni serotype O:6 (strain 81116 / NCTC 11828)</name>
    <dbReference type="NCBI Taxonomy" id="407148"/>
    <lineage>
        <taxon>Bacteria</taxon>
        <taxon>Pseudomonadati</taxon>
        <taxon>Campylobacterota</taxon>
        <taxon>Epsilonproteobacteria</taxon>
        <taxon>Campylobacterales</taxon>
        <taxon>Campylobacteraceae</taxon>
        <taxon>Campylobacter</taxon>
    </lineage>
</organism>
<sequence>MVSMRDLLECGVHFGHQTRRWNPKMKKFIFGERKGIYVIDLQKTLRYFRYTYNIVRDAAAEGKTILFVGTKKQAGGAIKEYAEKCGMPYVNHRWLGGMMTNFGTIRQSIRKLEVIEKMEEDGSIKLLTKKEALMLTRKKEKLLAYLGGIRYMKTQPDMIFVIDTVKEKIAVQEANRLRIPVVAPLDTNCDPDLVTYPIPGNDDAIRSVQLFCQEMAEAINEGKALREQDGEALANEEKEITDEEKKEVLDEAMSEEDFGEEQE</sequence>
<proteinExistence type="inferred from homology"/>
<keyword id="KW-0687">Ribonucleoprotein</keyword>
<keyword id="KW-0689">Ribosomal protein</keyword>
<dbReference type="EMBL" id="CP000814">
    <property type="protein sequence ID" value="ABV52725.1"/>
    <property type="molecule type" value="Genomic_DNA"/>
</dbReference>
<dbReference type="RefSeq" id="WP_002853455.1">
    <property type="nucleotide sequence ID" value="NC_009839.1"/>
</dbReference>
<dbReference type="SMR" id="A8FMN8"/>
<dbReference type="KEGG" id="cju:C8J_1126"/>
<dbReference type="HOGENOM" id="CLU_040318_1_2_7"/>
<dbReference type="GO" id="GO:0022627">
    <property type="term" value="C:cytosolic small ribosomal subunit"/>
    <property type="evidence" value="ECO:0007669"/>
    <property type="project" value="TreeGrafter"/>
</dbReference>
<dbReference type="GO" id="GO:0003735">
    <property type="term" value="F:structural constituent of ribosome"/>
    <property type="evidence" value="ECO:0007669"/>
    <property type="project" value="InterPro"/>
</dbReference>
<dbReference type="GO" id="GO:0006412">
    <property type="term" value="P:translation"/>
    <property type="evidence" value="ECO:0007669"/>
    <property type="project" value="UniProtKB-UniRule"/>
</dbReference>
<dbReference type="CDD" id="cd01425">
    <property type="entry name" value="RPS2"/>
    <property type="match status" value="1"/>
</dbReference>
<dbReference type="FunFam" id="1.10.287.610:FF:000001">
    <property type="entry name" value="30S ribosomal protein S2"/>
    <property type="match status" value="1"/>
</dbReference>
<dbReference type="Gene3D" id="3.40.50.10490">
    <property type="entry name" value="Glucose-6-phosphate isomerase like protein, domain 1"/>
    <property type="match status" value="1"/>
</dbReference>
<dbReference type="Gene3D" id="1.10.287.610">
    <property type="entry name" value="Helix hairpin bin"/>
    <property type="match status" value="1"/>
</dbReference>
<dbReference type="HAMAP" id="MF_00291_B">
    <property type="entry name" value="Ribosomal_uS2_B"/>
    <property type="match status" value="1"/>
</dbReference>
<dbReference type="InterPro" id="IPR001865">
    <property type="entry name" value="Ribosomal_uS2"/>
</dbReference>
<dbReference type="InterPro" id="IPR005706">
    <property type="entry name" value="Ribosomal_uS2_bac/mit/plastid"/>
</dbReference>
<dbReference type="InterPro" id="IPR018130">
    <property type="entry name" value="Ribosomal_uS2_CS"/>
</dbReference>
<dbReference type="InterPro" id="IPR023591">
    <property type="entry name" value="Ribosomal_uS2_flav_dom_sf"/>
</dbReference>
<dbReference type="NCBIfam" id="TIGR01011">
    <property type="entry name" value="rpsB_bact"/>
    <property type="match status" value="1"/>
</dbReference>
<dbReference type="PANTHER" id="PTHR12534">
    <property type="entry name" value="30S RIBOSOMAL PROTEIN S2 PROKARYOTIC AND ORGANELLAR"/>
    <property type="match status" value="1"/>
</dbReference>
<dbReference type="PANTHER" id="PTHR12534:SF0">
    <property type="entry name" value="SMALL RIBOSOMAL SUBUNIT PROTEIN US2M"/>
    <property type="match status" value="1"/>
</dbReference>
<dbReference type="Pfam" id="PF00318">
    <property type="entry name" value="Ribosomal_S2"/>
    <property type="match status" value="1"/>
</dbReference>
<dbReference type="PRINTS" id="PR00395">
    <property type="entry name" value="RIBOSOMALS2"/>
</dbReference>
<dbReference type="SUPFAM" id="SSF52313">
    <property type="entry name" value="Ribosomal protein S2"/>
    <property type="match status" value="1"/>
</dbReference>
<dbReference type="PROSITE" id="PS00962">
    <property type="entry name" value="RIBOSOMAL_S2_1"/>
    <property type="match status" value="1"/>
</dbReference>
<dbReference type="PROSITE" id="PS00963">
    <property type="entry name" value="RIBOSOMAL_S2_2"/>
    <property type="match status" value="1"/>
</dbReference>
<gene>
    <name evidence="1" type="primary">rpsB</name>
    <name type="ordered locus">C8J_1126</name>
</gene>
<reference key="1">
    <citation type="journal article" date="2007" name="J. Bacteriol.">
        <title>The complete genome sequence of Campylobacter jejuni strain 81116 (NCTC11828).</title>
        <authorList>
            <person name="Pearson B.M."/>
            <person name="Gaskin D.J.H."/>
            <person name="Segers R.P.A.M."/>
            <person name="Wells J.M."/>
            <person name="Nuijten P.J.M."/>
            <person name="van Vliet A.H.M."/>
        </authorList>
    </citation>
    <scope>NUCLEOTIDE SEQUENCE [LARGE SCALE GENOMIC DNA]</scope>
    <source>
        <strain>81116 / NCTC 11828</strain>
    </source>
</reference>
<comment type="similarity">
    <text evidence="1">Belongs to the universal ribosomal protein uS2 family.</text>
</comment>
<protein>
    <recommendedName>
        <fullName evidence="1">Small ribosomal subunit protein uS2</fullName>
    </recommendedName>
    <alternativeName>
        <fullName evidence="3">30S ribosomal protein S2</fullName>
    </alternativeName>
</protein>
<feature type="chain" id="PRO_1000071945" description="Small ribosomal subunit protein uS2">
    <location>
        <begin position="1"/>
        <end position="263"/>
    </location>
</feature>
<feature type="region of interest" description="Disordered" evidence="2">
    <location>
        <begin position="223"/>
        <end position="263"/>
    </location>
</feature>
<feature type="compositionally biased region" description="Basic and acidic residues" evidence="2">
    <location>
        <begin position="223"/>
        <end position="249"/>
    </location>
</feature>
<feature type="compositionally biased region" description="Acidic residues" evidence="2">
    <location>
        <begin position="250"/>
        <end position="263"/>
    </location>
</feature>
<name>RS2_CAMJ8</name>